<reference key="1">
    <citation type="submission" date="2005-11" db="EMBL/GenBank/DDBJ databases">
        <authorList>
            <consortium name="NIH - Mammalian Gene Collection (MGC) project"/>
        </authorList>
    </citation>
    <scope>NUCLEOTIDE SEQUENCE [LARGE SCALE MRNA]</scope>
    <source>
        <strain>Crossbred X Angus</strain>
        <tissue>Liver</tissue>
    </source>
</reference>
<sequence>MAAQAGDDAWRCQGCGDYVAPNQRLYRTVSEAWPTSCFRCSECQDSLTNWYYEKDGKLYCHKDYWGKFGEFCHGCSLLMTGPVMVAGEFKYHPECFACMSCKVIIEDGDAYALVQHATLYCGKCHNEVVLAPMFERLSTESVQDQLPYSVTHISMPATTEGRRGFSVSVESACSNYATTVQVREVNRMHISPNNRNAIHPGDRILEINGAPVRTLRVEEVEDAISQTTQTLQLLIEHDPVSQRLDQLQLDARLSPCAQNDRHAHTLSPLDTKENLEGTLRRRSLRRSNSISKSPGPSSPKEPLLLSRDISRSESLRCSSSCSQQIFRPCDLIHGEVLGKGFFGQAIKVTHKATGKVMVMNELIRCDEETQKTFLTEVKVMRSLDHPNVLKFIGVLYKDKKLNLLTEYIEGGTLKDFLRNVDPFPWQQKVRFAKGIASGMAYLHSMCIIHRDLNSHNCLIKLDKTVVVADFGLSRLIVEERKKPPVEKATTKKRTLRKSDRKKRYTVVGNPYWMAPEMLNGKSYDETVDVFSFGIVLCEIIGQVYADPDCLPRTLDFGLNVKLFWEKFVPEECPPAFFPLAAICCRLEPESRPAFSKLEDFFEALSLYLGELGIPLPTELEDLDHTVSMEYGLIRNPPP</sequence>
<gene>
    <name type="primary">LIMK2</name>
</gene>
<comment type="function">
    <text evidence="1">Serine/threonine-protein kinase that plays an essential role in the regulation of actin filament dynamics. Acts downstream of several Rho family GTPase signal transduction pathways. Involved in astral microtubule organization and mitotic spindle orientation during early stages of mitosis by mediating phosphorylation of TPPP. Displays serine/threonine-specific phosphorylation of myelin basic protein and histone (MBP) in vitro. Suppresses ciliogenesis via multiple pathways; phosphorylation of CFL1, suppression of directional trafficking of ciliary vesicles to the ciliary base, and by facilitating YAP1 nuclear localization where it acts as a transcriptional corepressor of the TEAD4 target genes AURKA and PLK1 (By similarity).</text>
</comment>
<comment type="catalytic activity">
    <reaction evidence="1">
        <text>L-seryl-[protein] + ATP = O-phospho-L-seryl-[protein] + ADP + H(+)</text>
        <dbReference type="Rhea" id="RHEA:17989"/>
        <dbReference type="Rhea" id="RHEA-COMP:9863"/>
        <dbReference type="Rhea" id="RHEA-COMP:11604"/>
        <dbReference type="ChEBI" id="CHEBI:15378"/>
        <dbReference type="ChEBI" id="CHEBI:29999"/>
        <dbReference type="ChEBI" id="CHEBI:30616"/>
        <dbReference type="ChEBI" id="CHEBI:83421"/>
        <dbReference type="ChEBI" id="CHEBI:456216"/>
        <dbReference type="EC" id="2.7.11.1"/>
    </reaction>
    <physiologicalReaction direction="left-to-right" evidence="1">
        <dbReference type="Rhea" id="RHEA:17990"/>
    </physiologicalReaction>
</comment>
<comment type="catalytic activity">
    <reaction evidence="1">
        <text>L-threonyl-[protein] + ATP = O-phospho-L-threonyl-[protein] + ADP + H(+)</text>
        <dbReference type="Rhea" id="RHEA:46608"/>
        <dbReference type="Rhea" id="RHEA-COMP:11060"/>
        <dbReference type="Rhea" id="RHEA-COMP:11605"/>
        <dbReference type="ChEBI" id="CHEBI:15378"/>
        <dbReference type="ChEBI" id="CHEBI:30013"/>
        <dbReference type="ChEBI" id="CHEBI:30616"/>
        <dbReference type="ChEBI" id="CHEBI:61977"/>
        <dbReference type="ChEBI" id="CHEBI:456216"/>
        <dbReference type="EC" id="2.7.11.1"/>
    </reaction>
    <physiologicalReaction direction="left-to-right" evidence="1">
        <dbReference type="Rhea" id="RHEA:46609"/>
    </physiologicalReaction>
</comment>
<comment type="subunit">
    <text evidence="1 2">Binds ROCK1 and MARF1 (By similarity). Interacts with NISCH (By similarity).</text>
</comment>
<comment type="subcellular location">
    <subcellularLocation>
        <location evidence="1">Cytoplasm</location>
        <location evidence="1">Cytoskeleton</location>
        <location evidence="1">Spindle</location>
    </subcellularLocation>
    <subcellularLocation>
        <location evidence="1">Cytoplasm</location>
        <location evidence="1">Cytoskeleton</location>
        <location evidence="1">Microtubule organizing center</location>
        <location evidence="1">Centrosome</location>
    </subcellularLocation>
</comment>
<comment type="PTM">
    <text evidence="1">Phosphorylated on serine and/or threonine residues by ROCK1.</text>
</comment>
<comment type="similarity">
    <text evidence="7">Belongs to the protein kinase superfamily. TKL Ser/Thr protein kinase family.</text>
</comment>
<name>LIMK2_BOVIN</name>
<keyword id="KW-0067">ATP-binding</keyword>
<keyword id="KW-0963">Cytoplasm</keyword>
<keyword id="KW-0206">Cytoskeleton</keyword>
<keyword id="KW-0418">Kinase</keyword>
<keyword id="KW-0440">LIM domain</keyword>
<keyword id="KW-0479">Metal-binding</keyword>
<keyword id="KW-0547">Nucleotide-binding</keyword>
<keyword id="KW-0597">Phosphoprotein</keyword>
<keyword id="KW-1185">Reference proteome</keyword>
<keyword id="KW-0677">Repeat</keyword>
<keyword id="KW-0723">Serine/threonine-protein kinase</keyword>
<keyword id="KW-0808">Transferase</keyword>
<keyword id="KW-0862">Zinc</keyword>
<protein>
    <recommendedName>
        <fullName>LIM domain kinase 2</fullName>
        <shortName>LIMK-2</shortName>
        <ecNumber evidence="1">2.7.11.1</ecNumber>
    </recommendedName>
</protein>
<feature type="chain" id="PRO_0000291380" description="LIM domain kinase 2">
    <location>
        <begin position="1"/>
        <end position="638"/>
    </location>
</feature>
<feature type="domain" description="LIM zinc-binding 1" evidence="3">
    <location>
        <begin position="12"/>
        <end position="63"/>
    </location>
</feature>
<feature type="domain" description="LIM zinc-binding 2" evidence="3">
    <location>
        <begin position="72"/>
        <end position="124"/>
    </location>
</feature>
<feature type="domain" description="PDZ" evidence="4">
    <location>
        <begin position="152"/>
        <end position="239"/>
    </location>
</feature>
<feature type="domain" description="Protein kinase" evidence="5">
    <location>
        <begin position="331"/>
        <end position="608"/>
    </location>
</feature>
<feature type="region of interest" description="Disordered" evidence="6">
    <location>
        <begin position="280"/>
        <end position="304"/>
    </location>
</feature>
<feature type="compositionally biased region" description="Low complexity" evidence="6">
    <location>
        <begin position="286"/>
        <end position="304"/>
    </location>
</feature>
<feature type="active site" evidence="1">
    <location>
        <position position="451"/>
    </location>
</feature>
<feature type="binding site" evidence="5">
    <location>
        <begin position="337"/>
        <end position="345"/>
    </location>
    <ligand>
        <name>ATP</name>
        <dbReference type="ChEBI" id="CHEBI:30616"/>
    </ligand>
</feature>
<feature type="binding site" evidence="5">
    <location>
        <position position="360"/>
    </location>
    <ligand>
        <name>ATP</name>
        <dbReference type="ChEBI" id="CHEBI:30616"/>
    </ligand>
</feature>
<feature type="modified residue" description="Phosphoserine" evidence="1">
    <location>
        <position position="293"/>
    </location>
</feature>
<feature type="modified residue" description="Phosphoserine" evidence="1">
    <location>
        <position position="298"/>
    </location>
</feature>
<feature type="modified residue" description="Phosphothreonine; by ROCK1 and CDC42BP" evidence="1">
    <location>
        <position position="505"/>
    </location>
</feature>
<dbReference type="EC" id="2.7.11.1" evidence="1"/>
<dbReference type="EMBL" id="BC109802">
    <property type="protein sequence ID" value="AAI09803.1"/>
    <property type="molecule type" value="mRNA"/>
</dbReference>
<dbReference type="RefSeq" id="NP_001033187.1">
    <property type="nucleotide sequence ID" value="NM_001038098.1"/>
</dbReference>
<dbReference type="SMR" id="Q32L23"/>
<dbReference type="FunCoup" id="Q32L23">
    <property type="interactions" value="2006"/>
</dbReference>
<dbReference type="STRING" id="9913.ENSBTAP00000068583"/>
<dbReference type="PaxDb" id="9913-ENSBTAP00000041788"/>
<dbReference type="GeneID" id="513539"/>
<dbReference type="KEGG" id="bta:513539"/>
<dbReference type="CTD" id="3985"/>
<dbReference type="eggNOG" id="KOG1187">
    <property type="taxonomic scope" value="Eukaryota"/>
</dbReference>
<dbReference type="InParanoid" id="Q32L23"/>
<dbReference type="OrthoDB" id="20134at2759"/>
<dbReference type="Proteomes" id="UP000009136">
    <property type="component" value="Unplaced"/>
</dbReference>
<dbReference type="GO" id="GO:0005813">
    <property type="term" value="C:centrosome"/>
    <property type="evidence" value="ECO:0000250"/>
    <property type="project" value="UniProtKB"/>
</dbReference>
<dbReference type="GO" id="GO:0005737">
    <property type="term" value="C:cytoplasm"/>
    <property type="evidence" value="ECO:0000318"/>
    <property type="project" value="GO_Central"/>
</dbReference>
<dbReference type="GO" id="GO:0072686">
    <property type="term" value="C:mitotic spindle"/>
    <property type="evidence" value="ECO:0000250"/>
    <property type="project" value="UniProtKB"/>
</dbReference>
<dbReference type="GO" id="GO:0005634">
    <property type="term" value="C:nucleus"/>
    <property type="evidence" value="ECO:0000318"/>
    <property type="project" value="GO_Central"/>
</dbReference>
<dbReference type="GO" id="GO:0005524">
    <property type="term" value="F:ATP binding"/>
    <property type="evidence" value="ECO:0007669"/>
    <property type="project" value="UniProtKB-KW"/>
</dbReference>
<dbReference type="GO" id="GO:0046872">
    <property type="term" value="F:metal ion binding"/>
    <property type="evidence" value="ECO:0007669"/>
    <property type="project" value="UniProtKB-KW"/>
</dbReference>
<dbReference type="GO" id="GO:0106310">
    <property type="term" value="F:protein serine kinase activity"/>
    <property type="evidence" value="ECO:0007669"/>
    <property type="project" value="RHEA"/>
</dbReference>
<dbReference type="GO" id="GO:0004674">
    <property type="term" value="F:protein serine/threonine kinase activity"/>
    <property type="evidence" value="ECO:0000250"/>
    <property type="project" value="UniProtKB"/>
</dbReference>
<dbReference type="GO" id="GO:0030036">
    <property type="term" value="P:actin cytoskeleton organization"/>
    <property type="evidence" value="ECO:0000318"/>
    <property type="project" value="GO_Central"/>
</dbReference>
<dbReference type="GO" id="GO:0030953">
    <property type="term" value="P:astral microtubule organization"/>
    <property type="evidence" value="ECO:0000250"/>
    <property type="project" value="UniProtKB"/>
</dbReference>
<dbReference type="GO" id="GO:0051650">
    <property type="term" value="P:establishment of vesicle localization"/>
    <property type="evidence" value="ECO:0000250"/>
    <property type="project" value="UniProtKB"/>
</dbReference>
<dbReference type="GO" id="GO:1902018">
    <property type="term" value="P:negative regulation of cilium assembly"/>
    <property type="evidence" value="ECO:0000250"/>
    <property type="project" value="UniProtKB"/>
</dbReference>
<dbReference type="GO" id="GO:1900182">
    <property type="term" value="P:positive regulation of protein localization to nucleus"/>
    <property type="evidence" value="ECO:0000250"/>
    <property type="project" value="UniProtKB"/>
</dbReference>
<dbReference type="GO" id="GO:0006468">
    <property type="term" value="P:protein phosphorylation"/>
    <property type="evidence" value="ECO:0000250"/>
    <property type="project" value="UniProtKB"/>
</dbReference>
<dbReference type="CDD" id="cd09465">
    <property type="entry name" value="LIM2_LIMK2"/>
    <property type="match status" value="1"/>
</dbReference>
<dbReference type="CDD" id="cd06754">
    <property type="entry name" value="PDZ_LIMK-like"/>
    <property type="match status" value="1"/>
</dbReference>
<dbReference type="CDD" id="cd14222">
    <property type="entry name" value="STKc_LIMK2"/>
    <property type="match status" value="1"/>
</dbReference>
<dbReference type="FunFam" id="2.10.110.10:FF:000038">
    <property type="entry name" value="LIM domain kinase 2"/>
    <property type="match status" value="1"/>
</dbReference>
<dbReference type="FunFam" id="2.10.110.10:FF:000090">
    <property type="entry name" value="LIM domain kinase 2"/>
    <property type="match status" value="1"/>
</dbReference>
<dbReference type="FunFam" id="3.30.200.20:FF:000038">
    <property type="entry name" value="LIM domain kinase 2"/>
    <property type="match status" value="1"/>
</dbReference>
<dbReference type="FunFam" id="1.10.510.10:FF:000197">
    <property type="entry name" value="LIM domain kinase 2 isoform X1"/>
    <property type="match status" value="1"/>
</dbReference>
<dbReference type="FunFam" id="2.30.42.10:FF:000082">
    <property type="entry name" value="LIM domain kinase 2 isoform X2"/>
    <property type="match status" value="1"/>
</dbReference>
<dbReference type="Gene3D" id="2.30.42.10">
    <property type="match status" value="1"/>
</dbReference>
<dbReference type="Gene3D" id="2.10.110.10">
    <property type="entry name" value="Cysteine Rich Protein"/>
    <property type="match status" value="2"/>
</dbReference>
<dbReference type="Gene3D" id="3.30.200.20">
    <property type="entry name" value="Phosphorylase Kinase, domain 1"/>
    <property type="match status" value="1"/>
</dbReference>
<dbReference type="Gene3D" id="1.10.510.10">
    <property type="entry name" value="Transferase(Phosphotransferase) domain 1"/>
    <property type="match status" value="1"/>
</dbReference>
<dbReference type="InterPro" id="IPR050940">
    <property type="entry name" value="Actin_reg-Ser/Thr_kinase"/>
</dbReference>
<dbReference type="InterPro" id="IPR011009">
    <property type="entry name" value="Kinase-like_dom_sf"/>
</dbReference>
<dbReference type="InterPro" id="IPR001478">
    <property type="entry name" value="PDZ"/>
</dbReference>
<dbReference type="InterPro" id="IPR036034">
    <property type="entry name" value="PDZ_sf"/>
</dbReference>
<dbReference type="InterPro" id="IPR000719">
    <property type="entry name" value="Prot_kinase_dom"/>
</dbReference>
<dbReference type="InterPro" id="IPR001245">
    <property type="entry name" value="Ser-Thr/Tyr_kinase_cat_dom"/>
</dbReference>
<dbReference type="InterPro" id="IPR001781">
    <property type="entry name" value="Znf_LIM"/>
</dbReference>
<dbReference type="PANTHER" id="PTHR46485">
    <property type="entry name" value="LIM DOMAIN KINASE 1"/>
    <property type="match status" value="1"/>
</dbReference>
<dbReference type="PANTHER" id="PTHR46485:SF1">
    <property type="entry name" value="LIM DOMAIN KINASE 2"/>
    <property type="match status" value="1"/>
</dbReference>
<dbReference type="Pfam" id="PF00412">
    <property type="entry name" value="LIM"/>
    <property type="match status" value="2"/>
</dbReference>
<dbReference type="Pfam" id="PF00595">
    <property type="entry name" value="PDZ"/>
    <property type="match status" value="1"/>
</dbReference>
<dbReference type="Pfam" id="PF07714">
    <property type="entry name" value="PK_Tyr_Ser-Thr"/>
    <property type="match status" value="1"/>
</dbReference>
<dbReference type="SMART" id="SM00132">
    <property type="entry name" value="LIM"/>
    <property type="match status" value="2"/>
</dbReference>
<dbReference type="SMART" id="SM00228">
    <property type="entry name" value="PDZ"/>
    <property type="match status" value="1"/>
</dbReference>
<dbReference type="SUPFAM" id="SSF57716">
    <property type="entry name" value="Glucocorticoid receptor-like (DNA-binding domain)"/>
    <property type="match status" value="2"/>
</dbReference>
<dbReference type="SUPFAM" id="SSF50156">
    <property type="entry name" value="PDZ domain-like"/>
    <property type="match status" value="1"/>
</dbReference>
<dbReference type="SUPFAM" id="SSF56112">
    <property type="entry name" value="Protein kinase-like (PK-like)"/>
    <property type="match status" value="1"/>
</dbReference>
<dbReference type="PROSITE" id="PS00478">
    <property type="entry name" value="LIM_DOMAIN_1"/>
    <property type="match status" value="1"/>
</dbReference>
<dbReference type="PROSITE" id="PS50023">
    <property type="entry name" value="LIM_DOMAIN_2"/>
    <property type="match status" value="2"/>
</dbReference>
<dbReference type="PROSITE" id="PS50106">
    <property type="entry name" value="PDZ"/>
    <property type="match status" value="1"/>
</dbReference>
<dbReference type="PROSITE" id="PS50011">
    <property type="entry name" value="PROTEIN_KINASE_DOM"/>
    <property type="match status" value="1"/>
</dbReference>
<proteinExistence type="evidence at transcript level"/>
<evidence type="ECO:0000250" key="1">
    <source>
        <dbReference type="UniProtKB" id="P53671"/>
    </source>
</evidence>
<evidence type="ECO:0000250" key="2">
    <source>
        <dbReference type="UniProtKB" id="Q8BJ34"/>
    </source>
</evidence>
<evidence type="ECO:0000255" key="3">
    <source>
        <dbReference type="PROSITE-ProRule" id="PRU00125"/>
    </source>
</evidence>
<evidence type="ECO:0000255" key="4">
    <source>
        <dbReference type="PROSITE-ProRule" id="PRU00143"/>
    </source>
</evidence>
<evidence type="ECO:0000255" key="5">
    <source>
        <dbReference type="PROSITE-ProRule" id="PRU00159"/>
    </source>
</evidence>
<evidence type="ECO:0000256" key="6">
    <source>
        <dbReference type="SAM" id="MobiDB-lite"/>
    </source>
</evidence>
<evidence type="ECO:0000305" key="7"/>
<accession>Q32L23</accession>
<organism>
    <name type="scientific">Bos taurus</name>
    <name type="common">Bovine</name>
    <dbReference type="NCBI Taxonomy" id="9913"/>
    <lineage>
        <taxon>Eukaryota</taxon>
        <taxon>Metazoa</taxon>
        <taxon>Chordata</taxon>
        <taxon>Craniata</taxon>
        <taxon>Vertebrata</taxon>
        <taxon>Euteleostomi</taxon>
        <taxon>Mammalia</taxon>
        <taxon>Eutheria</taxon>
        <taxon>Laurasiatheria</taxon>
        <taxon>Artiodactyla</taxon>
        <taxon>Ruminantia</taxon>
        <taxon>Pecora</taxon>
        <taxon>Bovidae</taxon>
        <taxon>Bovinae</taxon>
        <taxon>Bos</taxon>
    </lineage>
</organism>